<organism>
    <name type="scientific">Xenopus tropicalis</name>
    <name type="common">Western clawed frog</name>
    <name type="synonym">Silurana tropicalis</name>
    <dbReference type="NCBI Taxonomy" id="8364"/>
    <lineage>
        <taxon>Eukaryota</taxon>
        <taxon>Metazoa</taxon>
        <taxon>Chordata</taxon>
        <taxon>Craniata</taxon>
        <taxon>Vertebrata</taxon>
        <taxon>Euteleostomi</taxon>
        <taxon>Amphibia</taxon>
        <taxon>Batrachia</taxon>
        <taxon>Anura</taxon>
        <taxon>Pipoidea</taxon>
        <taxon>Pipidae</taxon>
        <taxon>Xenopodinae</taxon>
        <taxon>Xenopus</taxon>
        <taxon>Silurana</taxon>
    </lineage>
</organism>
<keyword id="KW-0238">DNA-binding</keyword>
<keyword id="KW-0539">Nucleus</keyword>
<keyword id="KW-1185">Reference proteome</keyword>
<keyword id="KW-0804">Transcription</keyword>
<keyword id="KW-0805">Transcription regulation</keyword>
<evidence type="ECO:0000250" key="1">
    <source>
        <dbReference type="UniProtKB" id="Q04891"/>
    </source>
</evidence>
<evidence type="ECO:0000250" key="2">
    <source>
        <dbReference type="UniProtKB" id="Q9UN79"/>
    </source>
</evidence>
<evidence type="ECO:0000255" key="3">
    <source>
        <dbReference type="PROSITE-ProRule" id="PRU00267"/>
    </source>
</evidence>
<evidence type="ECO:0000256" key="4">
    <source>
        <dbReference type="SAM" id="MobiDB-lite"/>
    </source>
</evidence>
<evidence type="ECO:0000312" key="5">
    <source>
        <dbReference type="EMBL" id="CAJ83449.1"/>
    </source>
</evidence>
<comment type="function">
    <text evidence="1">Transcription factor that binds to DNA at the consensus sequence 5'-AACAAT-3'.</text>
</comment>
<comment type="subunit">
    <text evidence="2">Homodimer.</text>
</comment>
<comment type="subcellular location">
    <subcellularLocation>
        <location evidence="1 3">Nucleus</location>
    </subcellularLocation>
</comment>
<proteinExistence type="evidence at transcript level"/>
<accession>Q28EW4</accession>
<reference evidence="5" key="1">
    <citation type="submission" date="2006-10" db="EMBL/GenBank/DDBJ databases">
        <authorList>
            <consortium name="Sanger Xenopus tropicalis EST/cDNA project"/>
        </authorList>
    </citation>
    <scope>NUCLEOTIDE SEQUENCE [LARGE SCALE MRNA]</scope>
    <source>
        <tissue evidence="5">Gastrula</tissue>
    </source>
</reference>
<name>SOX13_XENTR</name>
<feature type="chain" id="PRO_0000371506" description="Transcription factor Sox-13">
    <location>
        <begin position="1"/>
        <end position="566"/>
    </location>
</feature>
<feature type="DNA-binding region" description="HMG box" evidence="3">
    <location>
        <begin position="378"/>
        <end position="446"/>
    </location>
</feature>
<feature type="region of interest" description="Disordered" evidence="4">
    <location>
        <begin position="47"/>
        <end position="69"/>
    </location>
</feature>
<feature type="region of interest" description="Disordered" evidence="4">
    <location>
        <begin position="242"/>
        <end position="301"/>
    </location>
</feature>
<feature type="region of interest" description="Disordered" evidence="4">
    <location>
        <begin position="545"/>
        <end position="566"/>
    </location>
</feature>
<feature type="compositionally biased region" description="Polar residues" evidence="4">
    <location>
        <begin position="254"/>
        <end position="274"/>
    </location>
</feature>
<sequence length="566" mass="63710">MDNLQGELVSFPASQQECRISAKIPVSPSEGIEGHCFKVEEDYEEPALQSGTPPFFTKQDYESPPQDTNDLCELQADSSGSGRKEENLQLSKTVRDAMPALEKLLSNDWREILLGTKESLAEKELQLLFMIHQLTRLRDQLLSAHSEHRNMAAMLFEKQQQQMELARQQQEQIVKQQQQLIQQQHKINLLQQQIQHVNMPYVMIPAFPPAQTVTADPQMSLPIQPIPCKPVEYPMSLLHNSTTRGSVSAKRQETSQPLNLTAKPTDQVPNSRSSPKYRMSPVGSQGGSSMDSASSPQKANLPLGFLGEGDAITKAIQEACQLLHGQNTSPEHHQQKYRKELLDTLPEKEVQDGASLQHTEESVLGCNMDIDGSRGSHIKRPMNAFMVWAKDERRKILQAFPDMHNSSISKILGSRWKSMSNAEKQPYYEEQARLSRQHLERYPDYKYKPRPKRTCIVEGKRLRVGEYKALMKNRRQDTRQGYVITSIGALQCPPSPSGFSSQSLLDNLSQLPSSDHYNPQDCNIQVVKSHLLVSHEPHGAIPMAKDICSDSEDSGKSDGELVVITD</sequence>
<dbReference type="EMBL" id="CR762311">
    <property type="protein sequence ID" value="CAJ83449.1"/>
    <property type="molecule type" value="mRNA"/>
</dbReference>
<dbReference type="RefSeq" id="NP_001017004.1">
    <property type="nucleotide sequence ID" value="NM_001017004.2"/>
</dbReference>
<dbReference type="SMR" id="Q28EW4"/>
<dbReference type="FunCoup" id="Q28EW4">
    <property type="interactions" value="3025"/>
</dbReference>
<dbReference type="STRING" id="8364.ENSXETP00000054630"/>
<dbReference type="PaxDb" id="8364-ENSXETP00000037344"/>
<dbReference type="GeneID" id="549758"/>
<dbReference type="KEGG" id="xtr:549758"/>
<dbReference type="AGR" id="Xenbase:XB-GENE-481889"/>
<dbReference type="CTD" id="9580"/>
<dbReference type="Xenbase" id="XB-GENE-481889">
    <property type="gene designation" value="sox13"/>
</dbReference>
<dbReference type="eggNOG" id="KOG0528">
    <property type="taxonomic scope" value="Eukaryota"/>
</dbReference>
<dbReference type="HOGENOM" id="CLU_018522_1_1_1"/>
<dbReference type="InParanoid" id="Q28EW4"/>
<dbReference type="OrthoDB" id="6247875at2759"/>
<dbReference type="Proteomes" id="UP000008143">
    <property type="component" value="Chromosome 2"/>
</dbReference>
<dbReference type="GO" id="GO:0005634">
    <property type="term" value="C:nucleus"/>
    <property type="evidence" value="ECO:0000250"/>
    <property type="project" value="UniProtKB"/>
</dbReference>
<dbReference type="GO" id="GO:0043565">
    <property type="term" value="F:sequence-specific DNA binding"/>
    <property type="evidence" value="ECO:0000250"/>
    <property type="project" value="UniProtKB"/>
</dbReference>
<dbReference type="CDD" id="cd22030">
    <property type="entry name" value="HMG-box_SoxD"/>
    <property type="match status" value="1"/>
</dbReference>
<dbReference type="FunFam" id="1.10.30.10:FF:000003">
    <property type="entry name" value="Putative transcription factor SOX-6"/>
    <property type="match status" value="1"/>
</dbReference>
<dbReference type="Gene3D" id="1.10.30.10">
    <property type="entry name" value="High mobility group box domain"/>
    <property type="match status" value="1"/>
</dbReference>
<dbReference type="InterPro" id="IPR009071">
    <property type="entry name" value="HMG_box_dom"/>
</dbReference>
<dbReference type="InterPro" id="IPR036910">
    <property type="entry name" value="HMG_box_dom_sf"/>
</dbReference>
<dbReference type="InterPro" id="IPR051356">
    <property type="entry name" value="SOX/SOX-like_TF"/>
</dbReference>
<dbReference type="PANTHER" id="PTHR45789">
    <property type="entry name" value="FI18025P1"/>
    <property type="match status" value="1"/>
</dbReference>
<dbReference type="PANTHER" id="PTHR45789:SF4">
    <property type="entry name" value="TRANSCRIPTION FACTOR SOX-13"/>
    <property type="match status" value="1"/>
</dbReference>
<dbReference type="Pfam" id="PF00505">
    <property type="entry name" value="HMG_box"/>
    <property type="match status" value="1"/>
</dbReference>
<dbReference type="SMART" id="SM00398">
    <property type="entry name" value="HMG"/>
    <property type="match status" value="1"/>
</dbReference>
<dbReference type="SUPFAM" id="SSF47095">
    <property type="entry name" value="HMG-box"/>
    <property type="match status" value="1"/>
</dbReference>
<dbReference type="PROSITE" id="PS50118">
    <property type="entry name" value="HMG_BOX_2"/>
    <property type="match status" value="1"/>
</dbReference>
<protein>
    <recommendedName>
        <fullName>Transcription factor Sox-13</fullName>
    </recommendedName>
</protein>
<gene>
    <name type="primary">sox13</name>
    <name type="ORF">TGas067m20.1</name>
</gene>